<dbReference type="EMBL" id="CP000494">
    <property type="protein sequence ID" value="ABQ37076.1"/>
    <property type="molecule type" value="Genomic_DNA"/>
</dbReference>
<dbReference type="RefSeq" id="WP_006611834.1">
    <property type="nucleotide sequence ID" value="NC_009485.1"/>
</dbReference>
<dbReference type="SMR" id="A5ELN2"/>
<dbReference type="STRING" id="288000.BBta_5075"/>
<dbReference type="GeneID" id="92954038"/>
<dbReference type="KEGG" id="bbt:BBta_5075"/>
<dbReference type="eggNOG" id="COG0048">
    <property type="taxonomic scope" value="Bacteria"/>
</dbReference>
<dbReference type="HOGENOM" id="CLU_104295_1_2_5"/>
<dbReference type="OrthoDB" id="9802366at2"/>
<dbReference type="Proteomes" id="UP000000246">
    <property type="component" value="Chromosome"/>
</dbReference>
<dbReference type="GO" id="GO:0015935">
    <property type="term" value="C:small ribosomal subunit"/>
    <property type="evidence" value="ECO:0007669"/>
    <property type="project" value="InterPro"/>
</dbReference>
<dbReference type="GO" id="GO:0019843">
    <property type="term" value="F:rRNA binding"/>
    <property type="evidence" value="ECO:0007669"/>
    <property type="project" value="UniProtKB-UniRule"/>
</dbReference>
<dbReference type="GO" id="GO:0003735">
    <property type="term" value="F:structural constituent of ribosome"/>
    <property type="evidence" value="ECO:0007669"/>
    <property type="project" value="InterPro"/>
</dbReference>
<dbReference type="GO" id="GO:0000049">
    <property type="term" value="F:tRNA binding"/>
    <property type="evidence" value="ECO:0007669"/>
    <property type="project" value="UniProtKB-UniRule"/>
</dbReference>
<dbReference type="GO" id="GO:0006412">
    <property type="term" value="P:translation"/>
    <property type="evidence" value="ECO:0007669"/>
    <property type="project" value="UniProtKB-UniRule"/>
</dbReference>
<dbReference type="CDD" id="cd03368">
    <property type="entry name" value="Ribosomal_S12"/>
    <property type="match status" value="1"/>
</dbReference>
<dbReference type="FunFam" id="2.40.50.140:FF:000001">
    <property type="entry name" value="30S ribosomal protein S12"/>
    <property type="match status" value="1"/>
</dbReference>
<dbReference type="Gene3D" id="2.40.50.140">
    <property type="entry name" value="Nucleic acid-binding proteins"/>
    <property type="match status" value="1"/>
</dbReference>
<dbReference type="HAMAP" id="MF_00403_B">
    <property type="entry name" value="Ribosomal_uS12_B"/>
    <property type="match status" value="1"/>
</dbReference>
<dbReference type="InterPro" id="IPR012340">
    <property type="entry name" value="NA-bd_OB-fold"/>
</dbReference>
<dbReference type="InterPro" id="IPR006032">
    <property type="entry name" value="Ribosomal_uS12"/>
</dbReference>
<dbReference type="InterPro" id="IPR005679">
    <property type="entry name" value="Ribosomal_uS12_bac"/>
</dbReference>
<dbReference type="NCBIfam" id="TIGR00981">
    <property type="entry name" value="rpsL_bact"/>
    <property type="match status" value="1"/>
</dbReference>
<dbReference type="PANTHER" id="PTHR11652">
    <property type="entry name" value="30S RIBOSOMAL PROTEIN S12 FAMILY MEMBER"/>
    <property type="match status" value="1"/>
</dbReference>
<dbReference type="Pfam" id="PF00164">
    <property type="entry name" value="Ribosom_S12_S23"/>
    <property type="match status" value="1"/>
</dbReference>
<dbReference type="PIRSF" id="PIRSF002133">
    <property type="entry name" value="Ribosomal_S12/S23"/>
    <property type="match status" value="1"/>
</dbReference>
<dbReference type="PRINTS" id="PR01034">
    <property type="entry name" value="RIBOSOMALS12"/>
</dbReference>
<dbReference type="SUPFAM" id="SSF50249">
    <property type="entry name" value="Nucleic acid-binding proteins"/>
    <property type="match status" value="1"/>
</dbReference>
<dbReference type="PROSITE" id="PS00055">
    <property type="entry name" value="RIBOSOMAL_S12"/>
    <property type="match status" value="1"/>
</dbReference>
<feature type="chain" id="PRO_0000295957" description="Small ribosomal subunit protein uS12">
    <location>
        <begin position="1"/>
        <end position="123"/>
    </location>
</feature>
<feature type="region of interest" description="Disordered" evidence="3">
    <location>
        <begin position="9"/>
        <end position="32"/>
    </location>
</feature>
<feature type="modified residue" description="3-methylthioaspartic acid" evidence="1">
    <location>
        <position position="89"/>
    </location>
</feature>
<sequence length="123" mass="13905">MPTINQLIANPREVQKSRKKVPALQQSPQKRGVCTRVYTTTPKKPNSALRKVAKVRLTNGFEVIGYIPGEGHNLQEHSVVMIRGGRVKDLPGVRYHILRGVLDTQGVKNRKQRRSKYGAKRPK</sequence>
<name>RS12_BRASB</name>
<comment type="function">
    <text evidence="2">With S4 and S5 plays an important role in translational accuracy.</text>
</comment>
<comment type="function">
    <text evidence="2">Interacts with and stabilizes bases of the 16S rRNA that are involved in tRNA selection in the A site and with the mRNA backbone. Located at the interface of the 30S and 50S subunits, it traverses the body of the 30S subunit contacting proteins on the other side and probably holding the rRNA structure together. The combined cluster of proteins S8, S12 and S17 appears to hold together the shoulder and platform of the 30S subunit.</text>
</comment>
<comment type="subunit">
    <text evidence="2">Part of the 30S ribosomal subunit. Contacts proteins S8 and S17. May interact with IF1 in the 30S initiation complex.</text>
</comment>
<comment type="similarity">
    <text evidence="2">Belongs to the universal ribosomal protein uS12 family.</text>
</comment>
<organism>
    <name type="scientific">Bradyrhizobium sp. (strain BTAi1 / ATCC BAA-1182)</name>
    <dbReference type="NCBI Taxonomy" id="288000"/>
    <lineage>
        <taxon>Bacteria</taxon>
        <taxon>Pseudomonadati</taxon>
        <taxon>Pseudomonadota</taxon>
        <taxon>Alphaproteobacteria</taxon>
        <taxon>Hyphomicrobiales</taxon>
        <taxon>Nitrobacteraceae</taxon>
        <taxon>Bradyrhizobium</taxon>
    </lineage>
</organism>
<reference key="1">
    <citation type="journal article" date="2007" name="Science">
        <title>Legumes symbioses: absence of nod genes in photosynthetic bradyrhizobia.</title>
        <authorList>
            <person name="Giraud E."/>
            <person name="Moulin L."/>
            <person name="Vallenet D."/>
            <person name="Barbe V."/>
            <person name="Cytryn E."/>
            <person name="Avarre J.-C."/>
            <person name="Jaubert M."/>
            <person name="Simon D."/>
            <person name="Cartieaux F."/>
            <person name="Prin Y."/>
            <person name="Bena G."/>
            <person name="Hannibal L."/>
            <person name="Fardoux J."/>
            <person name="Kojadinovic M."/>
            <person name="Vuillet L."/>
            <person name="Lajus A."/>
            <person name="Cruveiller S."/>
            <person name="Rouy Z."/>
            <person name="Mangenot S."/>
            <person name="Segurens B."/>
            <person name="Dossat C."/>
            <person name="Franck W.L."/>
            <person name="Chang W.-S."/>
            <person name="Saunders E."/>
            <person name="Bruce D."/>
            <person name="Richardson P."/>
            <person name="Normand P."/>
            <person name="Dreyfus B."/>
            <person name="Pignol D."/>
            <person name="Stacey G."/>
            <person name="Emerich D."/>
            <person name="Vermeglio A."/>
            <person name="Medigue C."/>
            <person name="Sadowsky M."/>
        </authorList>
    </citation>
    <scope>NUCLEOTIDE SEQUENCE [LARGE SCALE GENOMIC DNA]</scope>
    <source>
        <strain>BTAi1 / ATCC BAA-1182</strain>
    </source>
</reference>
<evidence type="ECO:0000250" key="1"/>
<evidence type="ECO:0000255" key="2">
    <source>
        <dbReference type="HAMAP-Rule" id="MF_00403"/>
    </source>
</evidence>
<evidence type="ECO:0000256" key="3">
    <source>
        <dbReference type="SAM" id="MobiDB-lite"/>
    </source>
</evidence>
<evidence type="ECO:0000305" key="4"/>
<gene>
    <name evidence="2" type="primary">rpsL</name>
    <name type="ordered locus">BBta_5075</name>
</gene>
<accession>A5ELN2</accession>
<proteinExistence type="inferred from homology"/>
<keyword id="KW-0488">Methylation</keyword>
<keyword id="KW-1185">Reference proteome</keyword>
<keyword id="KW-0687">Ribonucleoprotein</keyword>
<keyword id="KW-0689">Ribosomal protein</keyword>
<keyword id="KW-0694">RNA-binding</keyword>
<keyword id="KW-0699">rRNA-binding</keyword>
<keyword id="KW-0820">tRNA-binding</keyword>
<protein>
    <recommendedName>
        <fullName evidence="2">Small ribosomal subunit protein uS12</fullName>
    </recommendedName>
    <alternativeName>
        <fullName evidence="4">30S ribosomal protein S12</fullName>
    </alternativeName>
</protein>